<gene>
    <name evidence="10" type="primary">NRPS9</name>
    <name evidence="8" type="synonym">NPS9</name>
    <name type="ORF">FG10990</name>
    <name type="ORF">FGRAMPH1_01T20959</name>
</gene>
<accession>I1S2J4</accession>
<accession>A0A098E2D6</accession>
<feature type="chain" id="PRO_0000449945" description="Nonribosomal peptide synthetase 9">
    <location>
        <begin position="1"/>
        <end position="819"/>
    </location>
</feature>
<feature type="domain" description="Carrier" evidence="2 12">
    <location>
        <begin position="722"/>
        <end position="798"/>
    </location>
</feature>
<feature type="region of interest" description="Adenylation (A) domain" evidence="1 12">
    <location>
        <begin position="202"/>
        <end position="591"/>
    </location>
</feature>
<feature type="modified residue" description="O-(pantetheine 4'-phosphoryl)serine" evidence="2">
    <location>
        <position position="759"/>
    </location>
</feature>
<dbReference type="EC" id="6.3.2.-" evidence="12"/>
<dbReference type="EMBL" id="HG970334">
    <property type="protein sequence ID" value="CEF88261.1"/>
    <property type="molecule type" value="Genomic_DNA"/>
</dbReference>
<dbReference type="RefSeq" id="XP_011325380.1">
    <property type="nucleotide sequence ID" value="XM_011327078.1"/>
</dbReference>
<dbReference type="SMR" id="I1S2J4"/>
<dbReference type="STRING" id="229533.I1S2J4"/>
<dbReference type="KEGG" id="fgr:FGSG_10990"/>
<dbReference type="VEuPathDB" id="FungiDB:FGRAMPH1_01G20959"/>
<dbReference type="eggNOG" id="KOG1178">
    <property type="taxonomic scope" value="Eukaryota"/>
</dbReference>
<dbReference type="HOGENOM" id="CLU_000022_2_12_1"/>
<dbReference type="InParanoid" id="I1S2J4"/>
<dbReference type="OrthoDB" id="70352at110618"/>
<dbReference type="PHI-base" id="PHI:9043"/>
<dbReference type="Proteomes" id="UP000070720">
    <property type="component" value="Chromosome 3"/>
</dbReference>
<dbReference type="GO" id="GO:0005737">
    <property type="term" value="C:cytoplasm"/>
    <property type="evidence" value="ECO:0007669"/>
    <property type="project" value="TreeGrafter"/>
</dbReference>
<dbReference type="GO" id="GO:0016874">
    <property type="term" value="F:ligase activity"/>
    <property type="evidence" value="ECO:0007669"/>
    <property type="project" value="UniProtKB-KW"/>
</dbReference>
<dbReference type="GO" id="GO:0031177">
    <property type="term" value="F:phosphopantetheine binding"/>
    <property type="evidence" value="ECO:0007669"/>
    <property type="project" value="InterPro"/>
</dbReference>
<dbReference type="GO" id="GO:0043041">
    <property type="term" value="P:amino acid activation for nonribosomal peptide biosynthetic process"/>
    <property type="evidence" value="ECO:0007669"/>
    <property type="project" value="TreeGrafter"/>
</dbReference>
<dbReference type="GO" id="GO:0044550">
    <property type="term" value="P:secondary metabolite biosynthetic process"/>
    <property type="evidence" value="ECO:0007669"/>
    <property type="project" value="TreeGrafter"/>
</dbReference>
<dbReference type="CDD" id="cd05918">
    <property type="entry name" value="A_NRPS_SidN3_like"/>
    <property type="match status" value="1"/>
</dbReference>
<dbReference type="FunFam" id="3.30.300.30:FF:000015">
    <property type="entry name" value="Nonribosomal peptide synthase SidD"/>
    <property type="match status" value="1"/>
</dbReference>
<dbReference type="FunFam" id="1.10.1200.10:FF:000005">
    <property type="entry name" value="Nonribosomal peptide synthetase 1"/>
    <property type="match status" value="1"/>
</dbReference>
<dbReference type="Gene3D" id="3.30.300.30">
    <property type="match status" value="1"/>
</dbReference>
<dbReference type="Gene3D" id="1.10.1200.10">
    <property type="entry name" value="ACP-like"/>
    <property type="match status" value="1"/>
</dbReference>
<dbReference type="Gene3D" id="3.40.50.12780">
    <property type="entry name" value="N-terminal domain of ligase-like"/>
    <property type="match status" value="1"/>
</dbReference>
<dbReference type="InterPro" id="IPR036736">
    <property type="entry name" value="ACP-like_sf"/>
</dbReference>
<dbReference type="InterPro" id="IPR045851">
    <property type="entry name" value="AMP-bd_C_sf"/>
</dbReference>
<dbReference type="InterPro" id="IPR000873">
    <property type="entry name" value="AMP-dep_synth/lig_dom"/>
</dbReference>
<dbReference type="InterPro" id="IPR042099">
    <property type="entry name" value="ANL_N_sf"/>
</dbReference>
<dbReference type="InterPro" id="IPR020806">
    <property type="entry name" value="PKS_PP-bd"/>
</dbReference>
<dbReference type="InterPro" id="IPR009081">
    <property type="entry name" value="PP-bd_ACP"/>
</dbReference>
<dbReference type="InterPro" id="IPR006162">
    <property type="entry name" value="Ppantetheine_attach_site"/>
</dbReference>
<dbReference type="PANTHER" id="PTHR45527:SF16">
    <property type="entry name" value="NONRIBOSOMAL PEPTIDE SYNTHASE ATNA-RELATED"/>
    <property type="match status" value="1"/>
</dbReference>
<dbReference type="PANTHER" id="PTHR45527">
    <property type="entry name" value="NONRIBOSOMAL PEPTIDE SYNTHETASE"/>
    <property type="match status" value="1"/>
</dbReference>
<dbReference type="Pfam" id="PF00501">
    <property type="entry name" value="AMP-binding"/>
    <property type="match status" value="1"/>
</dbReference>
<dbReference type="Pfam" id="PF00550">
    <property type="entry name" value="PP-binding"/>
    <property type="match status" value="1"/>
</dbReference>
<dbReference type="SMART" id="SM00823">
    <property type="entry name" value="PKS_PP"/>
    <property type="match status" value="1"/>
</dbReference>
<dbReference type="SUPFAM" id="SSF56801">
    <property type="entry name" value="Acetyl-CoA synthetase-like"/>
    <property type="match status" value="1"/>
</dbReference>
<dbReference type="SUPFAM" id="SSF47336">
    <property type="entry name" value="ACP-like"/>
    <property type="match status" value="1"/>
</dbReference>
<dbReference type="PROSITE" id="PS50075">
    <property type="entry name" value="CARRIER"/>
    <property type="match status" value="1"/>
</dbReference>
<dbReference type="PROSITE" id="PS00012">
    <property type="entry name" value="PHOSPHOPANTETHEINE"/>
    <property type="match status" value="1"/>
</dbReference>
<keyword id="KW-0436">Ligase</keyword>
<keyword id="KW-0596">Phosphopantetheine</keyword>
<keyword id="KW-0597">Phosphoprotein</keyword>
<keyword id="KW-1185">Reference proteome</keyword>
<keyword id="KW-0677">Repeat</keyword>
<keyword id="KW-0843">Virulence</keyword>
<evidence type="ECO:0000255" key="1"/>
<evidence type="ECO:0000255" key="2">
    <source>
        <dbReference type="PROSITE-ProRule" id="PRU00258"/>
    </source>
</evidence>
<evidence type="ECO:0000269" key="3">
    <source>
    </source>
</evidence>
<evidence type="ECO:0000269" key="4">
    <source>
    </source>
</evidence>
<evidence type="ECO:0000269" key="5">
    <source>
    </source>
</evidence>
<evidence type="ECO:0000269" key="6">
    <source>
    </source>
</evidence>
<evidence type="ECO:0000269" key="7">
    <source>
    </source>
</evidence>
<evidence type="ECO:0000303" key="8">
    <source>
    </source>
</evidence>
<evidence type="ECO:0000303" key="9">
    <source>
    </source>
</evidence>
<evidence type="ECO:0000303" key="10">
    <source>
    </source>
</evidence>
<evidence type="ECO:0000305" key="11"/>
<evidence type="ECO:0000305" key="12">
    <source>
    </source>
</evidence>
<comment type="function">
    <text evidence="6 7 12">Nonribosomal peptide synthetase; part of the Fg3_54/C64 gene cluster that mediates the biosynthesis of the octapeptide fusaoctaxin A, a virulence factor that is required for cell-to-cell invasiveness of plant host (PubMed:30804501). The 2 nonribosomal peptide synthetases NRPS9 and NRPS5 form an assembly line which likely utilizes GABA as a starter unit (loaded on the unique module M1 of NRPS9) and sequentially incorporates seven extender units composed of the residues L-Ala, L-allo-Ile, L-Ser, L-Val, L-Ser, L-Leu and L-Leu, respectively (PubMed:30804501, PubMed:31100892). During the process, each of the residues that are tethered on modules M3-M7 of NRPS5 containing an E domain can undergo an epimerization reaction to produce a D-configuration before the transpeptidation reaction occurs (PubMed:30804501, PubMed:31100892). The elongation of the peptidyl chain might be terminated by module M8-mediated L-Leu incorporation, followed by R domain-catalyzed 4 electron reduction to release the resulting octapeptide from the assembly line as an alcohol (PubMed:30804501, PubMed:31100892). Fusaoctaxin A is cleaved by the cluster specific ABC transporter FGM5 to the pentapeptide fusapentaxin A and the tripeptide fusatrixin A (PubMed:31100892). The other enzymes from the cluster, FGM1, FGM2, FGM3 and FGM9 seem not to be involved in the biosynthesis of fusaoctaxin A and their functions have still to be determined (Probable).</text>
</comment>
<comment type="pathway">
    <text evidence="6">Secondary metabolite biosynthesis.</text>
</comment>
<comment type="induction">
    <text evidence="3 4 5 7">Expression is positively regulated by the cluster-specific transcription factor FGM4 and is induced during infection of coleoptiles of wheat seedlings (PubMed:23266949, PubMed:25333987). Expression is also up-regulated during infection of barley (PubMed:21585270). The fusaoctaxin A gene cluster is silenced by H3K27 trimethylation by the histone methyltransferase KMT6 (PubMed:31100892).</text>
</comment>
<comment type="domain">
    <text evidence="12">NRP synthetases are composed of discrete domains (adenylation (A), thiolation (T) or peptidyl carrier protein (PCP) and condensation (C) domains) which when grouped together are referred to as a single module. Each module is responsible for the recognition (via the A domain) and incorporation of a single amino acid into the growing peptide product. Thus, an NRP synthetase is generally composed of one or more modules and can terminate in a thioesterase domain (TE) that releases the newly synthesized peptide from the enzyme. Occasionally, epimerase (E) domains (responsible for L- to D-amino acid conversion) are present within the NRP synthetase. NRPS9 has a reduced A-T architecture.</text>
</comment>
<comment type="disruption phenotype">
    <text evidence="4 6">Leads to reduced virulence.</text>
</comment>
<comment type="similarity">
    <text evidence="11">Belongs to the NRP synthetase family.</text>
</comment>
<name>NRPS9_GIBZE</name>
<protein>
    <recommendedName>
        <fullName evidence="10">Nonribosomal peptide synthetase 9</fullName>
        <shortName evidence="10">NRPS 9</shortName>
        <ecNumber evidence="12">6.3.2.-</ecNumber>
    </recommendedName>
    <alternativeName>
        <fullName evidence="9">C64 cluster protein NRPS5</fullName>
    </alternativeName>
    <alternativeName>
        <fullName evidence="10">Fg3_54 cluster protein NRPS9</fullName>
    </alternativeName>
    <alternativeName>
        <fullName evidence="10">Fusaoctaxin A biosynthesis cluster protein NRPS9</fullName>
    </alternativeName>
</protein>
<reference key="1">
    <citation type="journal article" date="2007" name="Science">
        <title>The Fusarium graminearum genome reveals a link between localized polymorphism and pathogen specialization.</title>
        <authorList>
            <person name="Cuomo C.A."/>
            <person name="Gueldener U."/>
            <person name="Xu J.-R."/>
            <person name="Trail F."/>
            <person name="Turgeon B.G."/>
            <person name="Di Pietro A."/>
            <person name="Walton J.D."/>
            <person name="Ma L.-J."/>
            <person name="Baker S.E."/>
            <person name="Rep M."/>
            <person name="Adam G."/>
            <person name="Antoniw J."/>
            <person name="Baldwin T."/>
            <person name="Calvo S.E."/>
            <person name="Chang Y.-L."/>
            <person name="DeCaprio D."/>
            <person name="Gale L.R."/>
            <person name="Gnerre S."/>
            <person name="Goswami R.S."/>
            <person name="Hammond-Kosack K."/>
            <person name="Harris L.J."/>
            <person name="Hilburn K."/>
            <person name="Kennell J.C."/>
            <person name="Kroken S."/>
            <person name="Magnuson J.K."/>
            <person name="Mannhaupt G."/>
            <person name="Mauceli E.W."/>
            <person name="Mewes H.-W."/>
            <person name="Mitterbauer R."/>
            <person name="Muehlbauer G."/>
            <person name="Muensterkoetter M."/>
            <person name="Nelson D."/>
            <person name="O'Donnell K."/>
            <person name="Ouellet T."/>
            <person name="Qi W."/>
            <person name="Quesneville H."/>
            <person name="Roncero M.I.G."/>
            <person name="Seong K.-Y."/>
            <person name="Tetko I.V."/>
            <person name="Urban M."/>
            <person name="Waalwijk C."/>
            <person name="Ward T.J."/>
            <person name="Yao J."/>
            <person name="Birren B.W."/>
            <person name="Kistler H.C."/>
        </authorList>
    </citation>
    <scope>NUCLEOTIDE SEQUENCE [LARGE SCALE GENOMIC DNA]</scope>
    <source>
        <strain>ATCC MYA-4620 / CBS 123657 / FGSC 9075 / NRRL 31084 / PH-1</strain>
    </source>
</reference>
<reference key="2">
    <citation type="journal article" date="2010" name="Nature">
        <title>Comparative genomics reveals mobile pathogenicity chromosomes in Fusarium.</title>
        <authorList>
            <person name="Ma L.-J."/>
            <person name="van der Does H.C."/>
            <person name="Borkovich K.A."/>
            <person name="Coleman J.J."/>
            <person name="Daboussi M.-J."/>
            <person name="Di Pietro A."/>
            <person name="Dufresne M."/>
            <person name="Freitag M."/>
            <person name="Grabherr M."/>
            <person name="Henrissat B."/>
            <person name="Houterman P.M."/>
            <person name="Kang S."/>
            <person name="Shim W.-B."/>
            <person name="Woloshuk C."/>
            <person name="Xie X."/>
            <person name="Xu J.-R."/>
            <person name="Antoniw J."/>
            <person name="Baker S.E."/>
            <person name="Bluhm B.H."/>
            <person name="Breakspear A."/>
            <person name="Brown D.W."/>
            <person name="Butchko R.A.E."/>
            <person name="Chapman S."/>
            <person name="Coulson R."/>
            <person name="Coutinho P.M."/>
            <person name="Danchin E.G.J."/>
            <person name="Diener A."/>
            <person name="Gale L.R."/>
            <person name="Gardiner D.M."/>
            <person name="Goff S."/>
            <person name="Hammond-Kosack K.E."/>
            <person name="Hilburn K."/>
            <person name="Hua-Van A."/>
            <person name="Jonkers W."/>
            <person name="Kazan K."/>
            <person name="Kodira C.D."/>
            <person name="Koehrsen M."/>
            <person name="Kumar L."/>
            <person name="Lee Y.-H."/>
            <person name="Li L."/>
            <person name="Manners J.M."/>
            <person name="Miranda-Saavedra D."/>
            <person name="Mukherjee M."/>
            <person name="Park G."/>
            <person name="Park J."/>
            <person name="Park S.-Y."/>
            <person name="Proctor R.H."/>
            <person name="Regev A."/>
            <person name="Ruiz-Roldan M.C."/>
            <person name="Sain D."/>
            <person name="Sakthikumar S."/>
            <person name="Sykes S."/>
            <person name="Schwartz D.C."/>
            <person name="Turgeon B.G."/>
            <person name="Wapinski I."/>
            <person name="Yoder O."/>
            <person name="Young S."/>
            <person name="Zeng Q."/>
            <person name="Zhou S."/>
            <person name="Galagan J."/>
            <person name="Cuomo C.A."/>
            <person name="Kistler H.C."/>
            <person name="Rep M."/>
        </authorList>
    </citation>
    <scope>GENOME REANNOTATION</scope>
    <source>
        <strain>ATCC MYA-4620 / CBS 123657 / FGSC 9075 / NRRL 31084 / PH-1</strain>
    </source>
</reference>
<reference key="3">
    <citation type="journal article" date="2015" name="BMC Genomics">
        <title>The completed genome sequence of the pathogenic ascomycete fungus Fusarium graminearum.</title>
        <authorList>
            <person name="King R."/>
            <person name="Urban M."/>
            <person name="Hammond-Kosack M.C.U."/>
            <person name="Hassani-Pak K."/>
            <person name="Hammond-Kosack K.E."/>
        </authorList>
    </citation>
    <scope>NUCLEOTIDE SEQUENCE [LARGE SCALE GENOMIC DNA]</scope>
    <source>
        <strain>ATCC MYA-4620 / CBS 123657 / FGSC 9075 / NRRL 31084 / PH-1</strain>
    </source>
</reference>
<reference key="4">
    <citation type="submission" date="2017-01" db="UniProtKB">
        <authorList>
            <consortium name="EnsemblFungi"/>
        </authorList>
    </citation>
    <scope>IDENTIFICATION</scope>
    <source>
        <strain>ATCC MYA-4620 / CBS 123657 / FGSC 9075 / NRRL 31084 / PH-1</strain>
    </source>
</reference>
<reference key="5">
    <citation type="journal article" date="2011" name="Mol. Plant Microbe Interact.">
        <title>The transcriptome of Fusarium graminearum during the infection of wheat.</title>
        <authorList>
            <person name="Lysoee E."/>
            <person name="Seong K.Y."/>
            <person name="Kistler H.C."/>
        </authorList>
    </citation>
    <scope>INDUCTION</scope>
</reference>
<reference key="6">
    <citation type="journal article" date="2012" name="Plant Cell">
        <title>In planta stage-specific fungal gene profiling elucidates the molecular strategies of Fusarium graminearum growing inside wheat coleoptiles.</title>
        <authorList>
            <person name="Zhang X.W."/>
            <person name="Jia L.J."/>
            <person name="Zhang Y."/>
            <person name="Jiang G."/>
            <person name="Li X."/>
            <person name="Zhang D."/>
            <person name="Tang W.H."/>
        </authorList>
    </citation>
    <scope>INDUCTION</scope>
    <scope>DISRUPTION PHENOTYPE</scope>
</reference>
<reference key="7">
    <citation type="journal article" date="2014" name="PLoS ONE">
        <title>The Fusarium graminearum genome reveals more secondary metabolite gene clusters and hints of horizontal gene transfer.</title>
        <authorList>
            <person name="Sieber C.M."/>
            <person name="Lee W."/>
            <person name="Wong P."/>
            <person name="Muensterkoetter M."/>
            <person name="Mewes H.W."/>
            <person name="Schmeitzl C."/>
            <person name="Varga E."/>
            <person name="Berthiller F."/>
            <person name="Adam G."/>
            <person name="Gueldener U."/>
        </authorList>
    </citation>
    <scope>IDENTIFICATION</scope>
    <scope>INDUCTION</scope>
</reference>
<reference key="8">
    <citation type="journal article" date="2019" name="Nat. Commun.">
        <title>A linear nonribosomal octapeptide from Fusarium graminearum facilitates cell-to-cell invasion of wheat.</title>
        <authorList>
            <person name="Jia L.J."/>
            <person name="Tang H.Y."/>
            <person name="Wang W.Q."/>
            <person name="Yuan T.L."/>
            <person name="Wei W.Q."/>
            <person name="Pang B."/>
            <person name="Gong X.M."/>
            <person name="Wang S.F."/>
            <person name="Li Y.J."/>
            <person name="Zhang D."/>
            <person name="Liu W."/>
            <person name="Tang W.H."/>
        </authorList>
    </citation>
    <scope>FUNCTION</scope>
    <scope>DISRUPTION PHENOTYPE</scope>
    <scope>PATHWAY</scope>
</reference>
<reference key="9">
    <citation type="journal article" date="2019" name="Toxins">
        <title>Fusaoctaxin A, an example of a two-step mechanism for non-ribosomal peptide assembly and maturation in fungi.</title>
        <authorList>
            <person name="Westphal K.R."/>
            <person name="Nielsen K.A.H."/>
            <person name="Wollenberg R.D."/>
            <person name="Moellehoej M.B."/>
            <person name="Bachleitner S."/>
            <person name="Studt L."/>
            <person name="Lysoee E."/>
            <person name="Giese H."/>
            <person name="Wimmer R."/>
            <person name="Soerensen J.L."/>
            <person name="Sondergaard T.E."/>
        </authorList>
    </citation>
    <scope>FUNCTION</scope>
    <scope>CATALYTIC ACTIVITY</scope>
    <scope>PATHWAY</scope>
</reference>
<sequence>MAPLNTYTSTEVLLLDNACNDVHELGRALWSITVDRYHHRDEWTLTCLAEAHGRWDMTYRLVSIQNATTIGQLLAAERLVESPKDASDEDNIFAFATTGSRLPVRTLLGRSSFILQLSEFDGRPTAQVLFSGANNKGQARILLNVFHSLWETHGSSPLNAERPVCEVGGLSYEDVRILELVNSGRLAQQQECIHDVVLQHALQAPTQHAVRAWDGNLTYHQLNDHADRIATMLVSAGIGPGDFIPSIMEKSYWTIVVILATLKAGAVFVPIDPKCPASRINGIFLQVWPKVYFTNLGPQMRRKLNPSVACVDNFAEIVQQVQPGPLPPSRPDAIATCFFTSGSTGKPKGAIHDHSAIATGIVDLLGPFHMDSRTSSMHFVSPSFDVSVTEIAATLYAGGCICVPSEQGKLNDLNGQMRALGVTHAFLTPSVACQVKPSEVPTLQYIMLGGEPLGRATLEALCEDVHLINVYGSTESGLWDTASERLTLQSKPSNIGRSTGPRMWIVHPGNPGNLLPFGTVGEVMVESHCLARGYIGNQPAKTGFVPAPEWRHQLFPGMEQGRFYLTGDLGSYNPDGSIMLHGRKDTQAKIRGQRIELGEIEHQFKAALPTSRVVAEVVTIGSRTMLAAFVELSTAEDKTDIEPSVCVDSLSIRTAQAARLGATPALSAALPVYMVPEMYIPVNSIPLTMSGKTDRRRLRELASTITTVQLEMINGVDDEKEQPRNERERLIQATWAAVLQRKASTIGIHDHFFKIGGDSLSAMKVVAAARSRQLVINVGDILGHPTIASLAEFLSSSSTISYATKGMANRDIQVTVTVL</sequence>
<organism>
    <name type="scientific">Gibberella zeae (strain ATCC MYA-4620 / CBS 123657 / FGSC 9075 / NRRL 31084 / PH-1)</name>
    <name type="common">Wheat head blight fungus</name>
    <name type="synonym">Fusarium graminearum</name>
    <dbReference type="NCBI Taxonomy" id="229533"/>
    <lineage>
        <taxon>Eukaryota</taxon>
        <taxon>Fungi</taxon>
        <taxon>Dikarya</taxon>
        <taxon>Ascomycota</taxon>
        <taxon>Pezizomycotina</taxon>
        <taxon>Sordariomycetes</taxon>
        <taxon>Hypocreomycetidae</taxon>
        <taxon>Hypocreales</taxon>
        <taxon>Nectriaceae</taxon>
        <taxon>Fusarium</taxon>
    </lineage>
</organism>
<proteinExistence type="evidence at protein level"/>